<reference key="1">
    <citation type="submission" date="2009-02" db="EMBL/GenBank/DDBJ databases">
        <title>Genome sequence of Bacillus cereus 03BB102.</title>
        <authorList>
            <person name="Dodson R.J."/>
            <person name="Jackson P."/>
            <person name="Munk A.C."/>
            <person name="Brettin T."/>
            <person name="Bruce D."/>
            <person name="Detter C."/>
            <person name="Tapia R."/>
            <person name="Han C."/>
            <person name="Sutton G."/>
            <person name="Sims D."/>
        </authorList>
    </citation>
    <scope>NUCLEOTIDE SEQUENCE [LARGE SCALE GENOMIC DNA]</scope>
    <source>
        <strain>03BB102</strain>
    </source>
</reference>
<proteinExistence type="inferred from homology"/>
<gene>
    <name evidence="1" type="primary">mtnB</name>
    <name type="ordered locus">BCA_4151</name>
</gene>
<name>MTNB_BACC3</name>
<sequence length="212" mass="23911">MKQLFRQWYDLSEIKKELTTRNWFPATSGNISIKVSHEPLTFLITASGKDKTKTTPDDFLLVDHLGVPVLETELRPSAETILHTHIYNNTNAGCVLHVHTTDNNVITNLYSDAVTLQNQEIIKALDIWEEGATIHIPIIENHAHIPTLGENFRKHIQGDSGAVLIRNHGITVWGRDSFDAKKRLEAYEFLFQFHIKLLSIQGGVSNGANSYS</sequence>
<organism>
    <name type="scientific">Bacillus cereus (strain 03BB102)</name>
    <dbReference type="NCBI Taxonomy" id="572264"/>
    <lineage>
        <taxon>Bacteria</taxon>
        <taxon>Bacillati</taxon>
        <taxon>Bacillota</taxon>
        <taxon>Bacilli</taxon>
        <taxon>Bacillales</taxon>
        <taxon>Bacillaceae</taxon>
        <taxon>Bacillus</taxon>
        <taxon>Bacillus cereus group</taxon>
    </lineage>
</organism>
<feature type="chain" id="PRO_1000187343" description="Methylthioribulose-1-phosphate dehydratase">
    <location>
        <begin position="1"/>
        <end position="212"/>
    </location>
</feature>
<feature type="binding site" evidence="1">
    <location>
        <position position="97"/>
    </location>
    <ligand>
        <name>Zn(2+)</name>
        <dbReference type="ChEBI" id="CHEBI:29105"/>
    </ligand>
</feature>
<feature type="binding site" evidence="1">
    <location>
        <position position="99"/>
    </location>
    <ligand>
        <name>Zn(2+)</name>
        <dbReference type="ChEBI" id="CHEBI:29105"/>
    </ligand>
</feature>
<evidence type="ECO:0000255" key="1">
    <source>
        <dbReference type="HAMAP-Rule" id="MF_01677"/>
    </source>
</evidence>
<dbReference type="EC" id="4.2.1.109" evidence="1"/>
<dbReference type="EMBL" id="CP001407">
    <property type="protein sequence ID" value="ACO27205.1"/>
    <property type="molecule type" value="Genomic_DNA"/>
</dbReference>
<dbReference type="RefSeq" id="WP_000811328.1">
    <property type="nucleotide sequence ID" value="NZ_CP009318.1"/>
</dbReference>
<dbReference type="SMR" id="C1EQR3"/>
<dbReference type="KEGG" id="bcx:BCA_4151"/>
<dbReference type="PATRIC" id="fig|572264.18.peg.4101"/>
<dbReference type="UniPathway" id="UPA00904">
    <property type="reaction ID" value="UER00875"/>
</dbReference>
<dbReference type="Proteomes" id="UP000002210">
    <property type="component" value="Chromosome"/>
</dbReference>
<dbReference type="GO" id="GO:0005737">
    <property type="term" value="C:cytoplasm"/>
    <property type="evidence" value="ECO:0007669"/>
    <property type="project" value="InterPro"/>
</dbReference>
<dbReference type="GO" id="GO:0046570">
    <property type="term" value="F:methylthioribulose 1-phosphate dehydratase activity"/>
    <property type="evidence" value="ECO:0007669"/>
    <property type="project" value="UniProtKB-UniRule"/>
</dbReference>
<dbReference type="GO" id="GO:0008270">
    <property type="term" value="F:zinc ion binding"/>
    <property type="evidence" value="ECO:0007669"/>
    <property type="project" value="UniProtKB-UniRule"/>
</dbReference>
<dbReference type="GO" id="GO:0019509">
    <property type="term" value="P:L-methionine salvage from methylthioadenosine"/>
    <property type="evidence" value="ECO:0007669"/>
    <property type="project" value="UniProtKB-UniRule"/>
</dbReference>
<dbReference type="FunFam" id="3.40.225.10:FF:000007">
    <property type="entry name" value="Methylthioribulose-1-phosphate dehydratase"/>
    <property type="match status" value="1"/>
</dbReference>
<dbReference type="Gene3D" id="3.40.225.10">
    <property type="entry name" value="Class II aldolase/adducin N-terminal domain"/>
    <property type="match status" value="1"/>
</dbReference>
<dbReference type="HAMAP" id="MF_01677">
    <property type="entry name" value="Salvage_MtnB"/>
    <property type="match status" value="1"/>
</dbReference>
<dbReference type="InterPro" id="IPR001303">
    <property type="entry name" value="Aldolase_II/adducin_N"/>
</dbReference>
<dbReference type="InterPro" id="IPR036409">
    <property type="entry name" value="Aldolase_II/adducin_N_sf"/>
</dbReference>
<dbReference type="InterPro" id="IPR017714">
    <property type="entry name" value="MethylthioRu-1-P_deHdtase_MtnB"/>
</dbReference>
<dbReference type="NCBIfam" id="NF005244">
    <property type="entry name" value="PRK06754.1"/>
    <property type="match status" value="1"/>
</dbReference>
<dbReference type="NCBIfam" id="TIGR03328">
    <property type="entry name" value="salvage_mtnB"/>
    <property type="match status" value="1"/>
</dbReference>
<dbReference type="PANTHER" id="PTHR10640">
    <property type="entry name" value="METHYLTHIORIBULOSE-1-PHOSPHATE DEHYDRATASE"/>
    <property type="match status" value="1"/>
</dbReference>
<dbReference type="PANTHER" id="PTHR10640:SF7">
    <property type="entry name" value="METHYLTHIORIBULOSE-1-PHOSPHATE DEHYDRATASE"/>
    <property type="match status" value="1"/>
</dbReference>
<dbReference type="Pfam" id="PF00596">
    <property type="entry name" value="Aldolase_II"/>
    <property type="match status" value="1"/>
</dbReference>
<dbReference type="SMART" id="SM01007">
    <property type="entry name" value="Aldolase_II"/>
    <property type="match status" value="1"/>
</dbReference>
<dbReference type="SUPFAM" id="SSF53639">
    <property type="entry name" value="AraD/HMP-PK domain-like"/>
    <property type="match status" value="1"/>
</dbReference>
<comment type="function">
    <text evidence="1">Catalyzes the dehydration of methylthioribulose-1-phosphate (MTRu-1-P) into 2,3-diketo-5-methylthiopentyl-1-phosphate (DK-MTP-1-P).</text>
</comment>
<comment type="catalytic activity">
    <reaction evidence="1">
        <text>5-(methylsulfanyl)-D-ribulose 1-phosphate = 5-methylsulfanyl-2,3-dioxopentyl phosphate + H2O</text>
        <dbReference type="Rhea" id="RHEA:15549"/>
        <dbReference type="ChEBI" id="CHEBI:15377"/>
        <dbReference type="ChEBI" id="CHEBI:58548"/>
        <dbReference type="ChEBI" id="CHEBI:58828"/>
        <dbReference type="EC" id="4.2.1.109"/>
    </reaction>
</comment>
<comment type="cofactor">
    <cofactor evidence="1">
        <name>Zn(2+)</name>
        <dbReference type="ChEBI" id="CHEBI:29105"/>
    </cofactor>
    <text evidence="1">Binds 1 zinc ion per subunit.</text>
</comment>
<comment type="pathway">
    <text evidence="1">Amino-acid biosynthesis; L-methionine biosynthesis via salvage pathway; L-methionine from S-methyl-5-thio-alpha-D-ribose 1-phosphate: step 2/6.</text>
</comment>
<comment type="subunit">
    <text evidence="1">Homotetramer.</text>
</comment>
<comment type="similarity">
    <text evidence="1">Belongs to the aldolase class II family. MtnB subfamily.</text>
</comment>
<accession>C1EQR3</accession>
<keyword id="KW-0028">Amino-acid biosynthesis</keyword>
<keyword id="KW-0456">Lyase</keyword>
<keyword id="KW-0479">Metal-binding</keyword>
<keyword id="KW-0486">Methionine biosynthesis</keyword>
<keyword id="KW-0862">Zinc</keyword>
<protein>
    <recommendedName>
        <fullName evidence="1">Methylthioribulose-1-phosphate dehydratase</fullName>
        <shortName evidence="1">MTRu-1-P dehydratase</shortName>
        <ecNumber evidence="1">4.2.1.109</ecNumber>
    </recommendedName>
</protein>